<comment type="function">
    <text evidence="1">Involved in mRNA degradation. Catalyzes the phosphorolysis of single-stranded polyribonucleotides processively in the 3'- to 5'-direction.</text>
</comment>
<comment type="catalytic activity">
    <reaction evidence="1">
        <text>RNA(n+1) + phosphate = RNA(n) + a ribonucleoside 5'-diphosphate</text>
        <dbReference type="Rhea" id="RHEA:22096"/>
        <dbReference type="Rhea" id="RHEA-COMP:14527"/>
        <dbReference type="Rhea" id="RHEA-COMP:17342"/>
        <dbReference type="ChEBI" id="CHEBI:43474"/>
        <dbReference type="ChEBI" id="CHEBI:57930"/>
        <dbReference type="ChEBI" id="CHEBI:140395"/>
        <dbReference type="EC" id="2.7.7.8"/>
    </reaction>
</comment>
<comment type="cofactor">
    <cofactor evidence="1">
        <name>Mg(2+)</name>
        <dbReference type="ChEBI" id="CHEBI:18420"/>
    </cofactor>
</comment>
<comment type="subcellular location">
    <subcellularLocation>
        <location evidence="1">Cytoplasm</location>
    </subcellularLocation>
</comment>
<comment type="similarity">
    <text evidence="1">Belongs to the polyribonucleotide nucleotidyltransferase family.</text>
</comment>
<feature type="chain" id="PRO_0000329586" description="Polyribonucleotide nucleotidyltransferase">
    <location>
        <begin position="1"/>
        <end position="732"/>
    </location>
</feature>
<feature type="domain" description="KH" evidence="1">
    <location>
        <begin position="570"/>
        <end position="629"/>
    </location>
</feature>
<feature type="domain" description="S1 motif" evidence="1">
    <location>
        <begin position="639"/>
        <end position="713"/>
    </location>
</feature>
<feature type="region of interest" description="Disordered" evidence="2">
    <location>
        <begin position="710"/>
        <end position="732"/>
    </location>
</feature>
<feature type="compositionally biased region" description="Basic and acidic residues" evidence="2">
    <location>
        <begin position="715"/>
        <end position="732"/>
    </location>
</feature>
<feature type="binding site" evidence="1">
    <location>
        <position position="503"/>
    </location>
    <ligand>
        <name>Mg(2+)</name>
        <dbReference type="ChEBI" id="CHEBI:18420"/>
    </ligand>
</feature>
<feature type="binding site" evidence="1">
    <location>
        <position position="509"/>
    </location>
    <ligand>
        <name>Mg(2+)</name>
        <dbReference type="ChEBI" id="CHEBI:18420"/>
    </ligand>
</feature>
<dbReference type="EC" id="2.7.7.8" evidence="1"/>
<dbReference type="EMBL" id="CP000492">
    <property type="protein sequence ID" value="ABL64608.1"/>
    <property type="molecule type" value="Genomic_DNA"/>
</dbReference>
<dbReference type="RefSeq" id="WP_011744441.1">
    <property type="nucleotide sequence ID" value="NC_008639.1"/>
</dbReference>
<dbReference type="SMR" id="A1BDY1"/>
<dbReference type="STRING" id="290317.Cpha266_0552"/>
<dbReference type="KEGG" id="cph:Cpha266_0552"/>
<dbReference type="eggNOG" id="COG1185">
    <property type="taxonomic scope" value="Bacteria"/>
</dbReference>
<dbReference type="HOGENOM" id="CLU_004217_2_2_10"/>
<dbReference type="OrthoDB" id="9804305at2"/>
<dbReference type="Proteomes" id="UP000008701">
    <property type="component" value="Chromosome"/>
</dbReference>
<dbReference type="GO" id="GO:0005829">
    <property type="term" value="C:cytosol"/>
    <property type="evidence" value="ECO:0007669"/>
    <property type="project" value="TreeGrafter"/>
</dbReference>
<dbReference type="GO" id="GO:0000175">
    <property type="term" value="F:3'-5'-RNA exonuclease activity"/>
    <property type="evidence" value="ECO:0007669"/>
    <property type="project" value="TreeGrafter"/>
</dbReference>
<dbReference type="GO" id="GO:0000287">
    <property type="term" value="F:magnesium ion binding"/>
    <property type="evidence" value="ECO:0007669"/>
    <property type="project" value="UniProtKB-UniRule"/>
</dbReference>
<dbReference type="GO" id="GO:0004654">
    <property type="term" value="F:polyribonucleotide nucleotidyltransferase activity"/>
    <property type="evidence" value="ECO:0007669"/>
    <property type="project" value="UniProtKB-UniRule"/>
</dbReference>
<dbReference type="GO" id="GO:0003723">
    <property type="term" value="F:RNA binding"/>
    <property type="evidence" value="ECO:0007669"/>
    <property type="project" value="UniProtKB-UniRule"/>
</dbReference>
<dbReference type="GO" id="GO:0006402">
    <property type="term" value="P:mRNA catabolic process"/>
    <property type="evidence" value="ECO:0007669"/>
    <property type="project" value="UniProtKB-UniRule"/>
</dbReference>
<dbReference type="GO" id="GO:0006396">
    <property type="term" value="P:RNA processing"/>
    <property type="evidence" value="ECO:0007669"/>
    <property type="project" value="InterPro"/>
</dbReference>
<dbReference type="CDD" id="cd02393">
    <property type="entry name" value="KH-I_PNPase"/>
    <property type="match status" value="1"/>
</dbReference>
<dbReference type="CDD" id="cd11363">
    <property type="entry name" value="RNase_PH_PNPase_1"/>
    <property type="match status" value="1"/>
</dbReference>
<dbReference type="CDD" id="cd11364">
    <property type="entry name" value="RNase_PH_PNPase_2"/>
    <property type="match status" value="1"/>
</dbReference>
<dbReference type="FunFam" id="3.30.1370.10:FF:000001">
    <property type="entry name" value="Polyribonucleotide nucleotidyltransferase"/>
    <property type="match status" value="1"/>
</dbReference>
<dbReference type="FunFam" id="3.30.230.70:FF:000001">
    <property type="entry name" value="Polyribonucleotide nucleotidyltransferase"/>
    <property type="match status" value="1"/>
</dbReference>
<dbReference type="FunFam" id="3.30.230.70:FF:000002">
    <property type="entry name" value="Polyribonucleotide nucleotidyltransferase"/>
    <property type="match status" value="1"/>
</dbReference>
<dbReference type="Gene3D" id="3.30.230.70">
    <property type="entry name" value="GHMP Kinase, N-terminal domain"/>
    <property type="match status" value="2"/>
</dbReference>
<dbReference type="Gene3D" id="3.30.1370.10">
    <property type="entry name" value="K Homology domain, type 1"/>
    <property type="match status" value="1"/>
</dbReference>
<dbReference type="Gene3D" id="2.40.50.140">
    <property type="entry name" value="Nucleic acid-binding proteins"/>
    <property type="match status" value="1"/>
</dbReference>
<dbReference type="HAMAP" id="MF_01595">
    <property type="entry name" value="PNPase"/>
    <property type="match status" value="1"/>
</dbReference>
<dbReference type="InterPro" id="IPR001247">
    <property type="entry name" value="ExoRNase_PH_dom1"/>
</dbReference>
<dbReference type="InterPro" id="IPR015847">
    <property type="entry name" value="ExoRNase_PH_dom2"/>
</dbReference>
<dbReference type="InterPro" id="IPR036345">
    <property type="entry name" value="ExoRNase_PH_dom2_sf"/>
</dbReference>
<dbReference type="InterPro" id="IPR004087">
    <property type="entry name" value="KH_dom"/>
</dbReference>
<dbReference type="InterPro" id="IPR004088">
    <property type="entry name" value="KH_dom_type_1"/>
</dbReference>
<dbReference type="InterPro" id="IPR036612">
    <property type="entry name" value="KH_dom_type_1_sf"/>
</dbReference>
<dbReference type="InterPro" id="IPR012340">
    <property type="entry name" value="NA-bd_OB-fold"/>
</dbReference>
<dbReference type="InterPro" id="IPR012162">
    <property type="entry name" value="PNPase"/>
</dbReference>
<dbReference type="InterPro" id="IPR027408">
    <property type="entry name" value="PNPase/RNase_PH_dom_sf"/>
</dbReference>
<dbReference type="InterPro" id="IPR015848">
    <property type="entry name" value="PNPase_PH_RNA-bd_bac/org-type"/>
</dbReference>
<dbReference type="InterPro" id="IPR020568">
    <property type="entry name" value="Ribosomal_Su5_D2-typ_SF"/>
</dbReference>
<dbReference type="InterPro" id="IPR003029">
    <property type="entry name" value="S1_domain"/>
</dbReference>
<dbReference type="NCBIfam" id="TIGR03591">
    <property type="entry name" value="polynuc_phos"/>
    <property type="match status" value="1"/>
</dbReference>
<dbReference type="NCBIfam" id="NF008805">
    <property type="entry name" value="PRK11824.1"/>
    <property type="match status" value="1"/>
</dbReference>
<dbReference type="PANTHER" id="PTHR11252">
    <property type="entry name" value="POLYRIBONUCLEOTIDE NUCLEOTIDYLTRANSFERASE"/>
    <property type="match status" value="1"/>
</dbReference>
<dbReference type="PANTHER" id="PTHR11252:SF0">
    <property type="entry name" value="POLYRIBONUCLEOTIDE NUCLEOTIDYLTRANSFERASE 1, MITOCHONDRIAL"/>
    <property type="match status" value="1"/>
</dbReference>
<dbReference type="Pfam" id="PF00013">
    <property type="entry name" value="KH_1"/>
    <property type="match status" value="1"/>
</dbReference>
<dbReference type="Pfam" id="PF03726">
    <property type="entry name" value="PNPase"/>
    <property type="match status" value="1"/>
</dbReference>
<dbReference type="Pfam" id="PF01138">
    <property type="entry name" value="RNase_PH"/>
    <property type="match status" value="2"/>
</dbReference>
<dbReference type="Pfam" id="PF03725">
    <property type="entry name" value="RNase_PH_C"/>
    <property type="match status" value="2"/>
</dbReference>
<dbReference type="Pfam" id="PF00575">
    <property type="entry name" value="S1"/>
    <property type="match status" value="1"/>
</dbReference>
<dbReference type="PIRSF" id="PIRSF005499">
    <property type="entry name" value="PNPase"/>
    <property type="match status" value="1"/>
</dbReference>
<dbReference type="SMART" id="SM00322">
    <property type="entry name" value="KH"/>
    <property type="match status" value="1"/>
</dbReference>
<dbReference type="SMART" id="SM00316">
    <property type="entry name" value="S1"/>
    <property type="match status" value="1"/>
</dbReference>
<dbReference type="SUPFAM" id="SSF54791">
    <property type="entry name" value="Eukaryotic type KH-domain (KH-domain type I)"/>
    <property type="match status" value="1"/>
</dbReference>
<dbReference type="SUPFAM" id="SSF50249">
    <property type="entry name" value="Nucleic acid-binding proteins"/>
    <property type="match status" value="1"/>
</dbReference>
<dbReference type="SUPFAM" id="SSF55666">
    <property type="entry name" value="Ribonuclease PH domain 2-like"/>
    <property type="match status" value="2"/>
</dbReference>
<dbReference type="SUPFAM" id="SSF54211">
    <property type="entry name" value="Ribosomal protein S5 domain 2-like"/>
    <property type="match status" value="2"/>
</dbReference>
<dbReference type="PROSITE" id="PS50084">
    <property type="entry name" value="KH_TYPE_1"/>
    <property type="match status" value="1"/>
</dbReference>
<dbReference type="PROSITE" id="PS50126">
    <property type="entry name" value="S1"/>
    <property type="match status" value="1"/>
</dbReference>
<sequence length="732" mass="79495">MIINKAIDLGKGKILSIETGKMAKQADGAALVRLGDTMVLATVVSSKTPPPANQDYFPLQVEYREKYSAAGKFPGGFFKREGRPSEKEILTARLIDRALRPLFPDGYLFETQIIVTVFSSDQINDADVLGGVAASAAIMVSDIPFHNSMSEVRVGRINGEFIVNPNINELQGSDIDICIGGTANTICMLEGEMKEISEAEMLDAIKFGHEAIRKICALQDEMAAEIARPQRSFAPVKAPAKLKEVIAGLSETRLKELAYTPLCKEDRAEKTASVYKETLQSTLELFKALLTPEEIAAEPEKALCLNAHIIEEEIHAVEKKVMRHMILDDGKRLDGRTLDEIRPISIELGIIPRAHGSALFTRGETQALVTITLGTKKDAQSVDTLTDSADKRFMLHYNFPPFSVGETGRVGGTGRREIGHGNLAERSIKMVSPSETDFPYTIRIVSDILESNGSSSMASVCGGTLALMDGGVPIRKPVSGIAMGLIKEGDAYSVLSDILGNEDHLGDMDFKVAGTEDGITACQMDIKIDGLDYHILETALEQARKGRLHILDKMEVAIPISRGELAQYAPRLTSIQIPVDAIGLIIGKGGETIRSITEETGAEINIEDDGTVTIACSSPEGTNAAVETIKTLISKPEIGNTYLGKVRDIRDELGAFVEFLPKTDGLVHISEISKERVTKVSDHLKVGDRVKVKLVDIRKDPRTGKNRFALSIKAVESEPEKSDENKAGTEGN</sequence>
<protein>
    <recommendedName>
        <fullName evidence="1">Polyribonucleotide nucleotidyltransferase</fullName>
        <ecNumber evidence="1">2.7.7.8</ecNumber>
    </recommendedName>
    <alternativeName>
        <fullName evidence="1">Polynucleotide phosphorylase</fullName>
        <shortName evidence="1">PNPase</shortName>
    </alternativeName>
</protein>
<name>PNP_CHLPD</name>
<evidence type="ECO:0000255" key="1">
    <source>
        <dbReference type="HAMAP-Rule" id="MF_01595"/>
    </source>
</evidence>
<evidence type="ECO:0000256" key="2">
    <source>
        <dbReference type="SAM" id="MobiDB-lite"/>
    </source>
</evidence>
<proteinExistence type="inferred from homology"/>
<organism>
    <name type="scientific">Chlorobium phaeobacteroides (strain DSM 266 / SMG 266 / 2430)</name>
    <dbReference type="NCBI Taxonomy" id="290317"/>
    <lineage>
        <taxon>Bacteria</taxon>
        <taxon>Pseudomonadati</taxon>
        <taxon>Chlorobiota</taxon>
        <taxon>Chlorobiia</taxon>
        <taxon>Chlorobiales</taxon>
        <taxon>Chlorobiaceae</taxon>
        <taxon>Chlorobium/Pelodictyon group</taxon>
        <taxon>Chlorobium</taxon>
    </lineage>
</organism>
<keyword id="KW-0963">Cytoplasm</keyword>
<keyword id="KW-0460">Magnesium</keyword>
<keyword id="KW-0479">Metal-binding</keyword>
<keyword id="KW-0548">Nucleotidyltransferase</keyword>
<keyword id="KW-1185">Reference proteome</keyword>
<keyword id="KW-0694">RNA-binding</keyword>
<keyword id="KW-0808">Transferase</keyword>
<gene>
    <name evidence="1" type="primary">pnp</name>
    <name type="ordered locus">Cpha266_0552</name>
</gene>
<accession>A1BDY1</accession>
<reference key="1">
    <citation type="submission" date="2006-12" db="EMBL/GenBank/DDBJ databases">
        <title>Complete sequence of Chlorobium phaeobacteroides DSM 266.</title>
        <authorList>
            <consortium name="US DOE Joint Genome Institute"/>
            <person name="Copeland A."/>
            <person name="Lucas S."/>
            <person name="Lapidus A."/>
            <person name="Barry K."/>
            <person name="Detter J.C."/>
            <person name="Glavina del Rio T."/>
            <person name="Hammon N."/>
            <person name="Israni S."/>
            <person name="Pitluck S."/>
            <person name="Goltsman E."/>
            <person name="Schmutz J."/>
            <person name="Larimer F."/>
            <person name="Land M."/>
            <person name="Hauser L."/>
            <person name="Mikhailova N."/>
            <person name="Li T."/>
            <person name="Overmann J."/>
            <person name="Bryant D.A."/>
            <person name="Richardson P."/>
        </authorList>
    </citation>
    <scope>NUCLEOTIDE SEQUENCE [LARGE SCALE GENOMIC DNA]</scope>
    <source>
        <strain>DSM 266 / SMG 266 / 2430</strain>
    </source>
</reference>